<keyword id="KW-0963">Cytoplasm</keyword>
<keyword id="KW-0597">Phosphoprotein</keyword>
<keyword id="KW-0656">Proto-oncogene</keyword>
<keyword id="KW-1185">Reference proteome</keyword>
<keyword id="KW-0879">Wnt signaling pathway</keyword>
<proteinExistence type="evidence at protein level"/>
<gene>
    <name type="primary">Frat1</name>
</gene>
<protein>
    <recommendedName>
        <fullName>Proto-oncogene FRAT1</fullName>
    </recommendedName>
    <alternativeName>
        <fullName>Frequently rearranged in advanced T-cell lymphomas 1</fullName>
        <shortName>FRAT-1</shortName>
    </alternativeName>
</protein>
<evidence type="ECO:0000250" key="1"/>
<evidence type="ECO:0000256" key="2">
    <source>
        <dbReference type="SAM" id="MobiDB-lite"/>
    </source>
</evidence>
<evidence type="ECO:0000269" key="3">
    <source>
    </source>
</evidence>
<evidence type="ECO:0000269" key="4">
    <source>
    </source>
</evidence>
<evidence type="ECO:0000305" key="5"/>
<evidence type="ECO:0007744" key="6">
    <source>
    </source>
</evidence>
<reference key="1">
    <citation type="journal article" date="1997" name="EMBO J.">
        <title>Activation of a novel proto-oncogene, Frat1, contributes to progression of mouse T-cell lymphomas.</title>
        <authorList>
            <person name="Jonkers J."/>
            <person name="Korswagen H.C."/>
            <person name="Acton D."/>
            <person name="Breuer M."/>
            <person name="Berns A."/>
        </authorList>
    </citation>
    <scope>NUCLEOTIDE SEQUENCE [MRNA]</scope>
    <scope>INVOLVEMENT IN T-CELL LYMPHOMA</scope>
    <source>
        <tissue>Testis</tissue>
        <tissue>Thymus</tissue>
    </source>
</reference>
<reference key="2">
    <citation type="journal article" date="2004" name="J. Biol. Chem.">
        <title>Characterization and functional analysis of the murine Frat2 gene.</title>
        <authorList>
            <person name="van Amerongen R."/>
            <person name="van der Gulden H."/>
            <person name="Bleeker F."/>
            <person name="Jonkers J."/>
            <person name="Berns A."/>
        </authorList>
    </citation>
    <scope>SEQUENCE REVISION TO 132</scope>
    <scope>FUNCTION</scope>
    <scope>PHOSPHORYLATION</scope>
    <scope>SUBCELLULAR LOCATION</scope>
</reference>
<reference key="3">
    <citation type="journal article" date="2010" name="Cell">
        <title>A tissue-specific atlas of mouse protein phosphorylation and expression.</title>
        <authorList>
            <person name="Huttlin E.L."/>
            <person name="Jedrychowski M.P."/>
            <person name="Elias J.E."/>
            <person name="Goswami T."/>
            <person name="Rad R."/>
            <person name="Beausoleil S.A."/>
            <person name="Villen J."/>
            <person name="Haas W."/>
            <person name="Sowa M.E."/>
            <person name="Gygi S.P."/>
        </authorList>
    </citation>
    <scope>PHOSPHORYLATION [LARGE SCALE ANALYSIS] AT SER-243 AND SER-246</scope>
    <scope>IDENTIFICATION BY MASS SPECTROMETRY [LARGE SCALE ANALYSIS]</scope>
    <source>
        <tissue>Brown adipose tissue</tissue>
        <tissue>Spleen</tissue>
        <tissue>Testis</tissue>
    </source>
</reference>
<organism>
    <name type="scientific">Mus musculus</name>
    <name type="common">Mouse</name>
    <dbReference type="NCBI Taxonomy" id="10090"/>
    <lineage>
        <taxon>Eukaryota</taxon>
        <taxon>Metazoa</taxon>
        <taxon>Chordata</taxon>
        <taxon>Craniata</taxon>
        <taxon>Vertebrata</taxon>
        <taxon>Euteleostomi</taxon>
        <taxon>Mammalia</taxon>
        <taxon>Eutheria</taxon>
        <taxon>Euarchontoglires</taxon>
        <taxon>Glires</taxon>
        <taxon>Rodentia</taxon>
        <taxon>Myomorpha</taxon>
        <taxon>Muroidea</taxon>
        <taxon>Muridae</taxon>
        <taxon>Murinae</taxon>
        <taxon>Mus</taxon>
        <taxon>Mus</taxon>
    </lineage>
</organism>
<sequence>MPCRREEEEEAGDEAEGEEDDDSFLLLQQSVTLGGSTDVDQLIVQIGETLQLDAAHDRPASPCAAPGPPPPQVLAALPADKTGTPARRLLRPTGSAETGNPAPPGAVRCVLGERGRVRGRSAPYCVAEISPGASALPQQPGLDGPPGTGKLSTPQPLSGPCRRGWLRNAAASRRLQQRRGSQPETRTGDDDDPHRLLQQLVLSGNLIKEAVRRLHSRQLQLHAKLPAHPFLGPLSAPVHEPPSPGSPRAACSDPGAFMGRAQLRTGDDLLVPGS</sequence>
<name>FRAT1_MOUSE</name>
<feature type="chain" id="PRO_0000087333" description="Proto-oncogene FRAT1">
    <location>
        <begin position="1"/>
        <end position="274"/>
    </location>
</feature>
<feature type="region of interest" description="Disordered" evidence="2">
    <location>
        <begin position="1"/>
        <end position="24"/>
    </location>
</feature>
<feature type="region of interest" description="Disordered" evidence="2">
    <location>
        <begin position="55"/>
        <end position="107"/>
    </location>
</feature>
<feature type="region of interest" description="Disordered" evidence="2">
    <location>
        <begin position="132"/>
        <end position="194"/>
    </location>
</feature>
<feature type="region of interest" description="Involved in GSK-3 binding" evidence="1">
    <location>
        <begin position="191"/>
        <end position="214"/>
    </location>
</feature>
<feature type="region of interest" description="Disordered" evidence="2">
    <location>
        <begin position="232"/>
        <end position="274"/>
    </location>
</feature>
<feature type="compositionally biased region" description="Acidic residues" evidence="2">
    <location>
        <begin position="7"/>
        <end position="23"/>
    </location>
</feature>
<feature type="modified residue" description="Phosphoserine" evidence="6">
    <location>
        <position position="243"/>
    </location>
</feature>
<feature type="modified residue" description="Phosphoserine" evidence="6">
    <location>
        <position position="246"/>
    </location>
</feature>
<accession>P70339</accession>
<comment type="function">
    <text evidence="3">Positively regulates the Wnt signaling pathway by stabilizing beta-catenin through the association with GSK-3. May play a role in tumor progression and collaborate with PIM1 and MYC in lymphomagenesis.</text>
</comment>
<comment type="subunit">
    <text>Binds DVL1. Binds GSK-3 and prevent GSK-3-dependent phosphorylation.</text>
</comment>
<comment type="subcellular location">
    <subcellularLocation>
        <location evidence="3">Cytoplasm</location>
    </subcellularLocation>
</comment>
<comment type="tissue specificity">
    <text>Highly expressed in testis. Lower level of expression in spleen, thymus and brain.</text>
</comment>
<comment type="developmental stage">
    <text>Expressed at low levels during embryonic development.</text>
</comment>
<comment type="PTM">
    <text evidence="3">Phosphorylated.</text>
</comment>
<comment type="disease">
    <text evidence="4">Activation contributes to progression of mouse T-cell lymphomas (PubMed:9034327).</text>
</comment>
<comment type="similarity">
    <text evidence="5">Belongs to the GSK-3-binding protein family.</text>
</comment>
<dbReference type="EMBL" id="U58974">
    <property type="protein sequence ID" value="AAB72010.2"/>
    <property type="molecule type" value="mRNA"/>
</dbReference>
<dbReference type="CCDS" id="CCDS84438.1"/>
<dbReference type="RefSeq" id="NP_032069.2">
    <property type="nucleotide sequence ID" value="NM_008043.3"/>
</dbReference>
<dbReference type="SMR" id="P70339"/>
<dbReference type="BioGRID" id="199740">
    <property type="interactions" value="1"/>
</dbReference>
<dbReference type="ComplexPortal" id="CPX-108">
    <property type="entry name" value="Nuclear export complex Frat1-Gsk3b"/>
</dbReference>
<dbReference type="CORUM" id="P70339"/>
<dbReference type="FunCoup" id="P70339">
    <property type="interactions" value="1514"/>
</dbReference>
<dbReference type="STRING" id="10090.ENSMUSP00000147726"/>
<dbReference type="iPTMnet" id="P70339"/>
<dbReference type="PhosphoSitePlus" id="P70339"/>
<dbReference type="ProteomicsDB" id="267516"/>
<dbReference type="DNASU" id="14296"/>
<dbReference type="Ensembl" id="ENSMUST00000087155.5">
    <property type="protein sequence ID" value="ENSMUSP00000147726.2"/>
    <property type="gene ID" value="ENSMUSG00000067199.5"/>
</dbReference>
<dbReference type="GeneID" id="14296"/>
<dbReference type="KEGG" id="mmu:14296"/>
<dbReference type="UCSC" id="uc008hmi.2">
    <property type="organism name" value="mouse"/>
</dbReference>
<dbReference type="AGR" id="MGI:109450"/>
<dbReference type="CTD" id="10023"/>
<dbReference type="MGI" id="MGI:109450">
    <property type="gene designation" value="Frat1"/>
</dbReference>
<dbReference type="VEuPathDB" id="HostDB:ENSMUSG00000067199"/>
<dbReference type="GeneTree" id="ENSGT00390000007081"/>
<dbReference type="InParanoid" id="P70339"/>
<dbReference type="OMA" id="RCEQARG"/>
<dbReference type="OrthoDB" id="6381246at2759"/>
<dbReference type="PhylomeDB" id="P70339"/>
<dbReference type="Reactome" id="R-MMU-196299">
    <property type="pathway name" value="Beta-catenin phosphorylation cascade"/>
</dbReference>
<dbReference type="Reactome" id="R-MMU-4641262">
    <property type="pathway name" value="Disassembly of the destruction complex and recruitment of AXIN to the membrane"/>
</dbReference>
<dbReference type="BioGRID-ORCS" id="14296">
    <property type="hits" value="3 hits in 17 CRISPR screens"/>
</dbReference>
<dbReference type="PRO" id="PR:P70339"/>
<dbReference type="Proteomes" id="UP000000589">
    <property type="component" value="Chromosome 19"/>
</dbReference>
<dbReference type="RNAct" id="P70339">
    <property type="molecule type" value="protein"/>
</dbReference>
<dbReference type="Bgee" id="ENSMUSG00000067199">
    <property type="expression patterns" value="Expressed in spermatid and 117 other cell types or tissues"/>
</dbReference>
<dbReference type="ExpressionAtlas" id="P70339">
    <property type="expression patterns" value="baseline and differential"/>
</dbReference>
<dbReference type="GO" id="GO:0005737">
    <property type="term" value="C:cytoplasm"/>
    <property type="evidence" value="ECO:0000314"/>
    <property type="project" value="MGI"/>
</dbReference>
<dbReference type="GO" id="GO:0005634">
    <property type="term" value="C:nucleus"/>
    <property type="evidence" value="ECO:0000314"/>
    <property type="project" value="MGI"/>
</dbReference>
<dbReference type="GO" id="GO:0060070">
    <property type="term" value="P:canonical Wnt signaling pathway"/>
    <property type="evidence" value="ECO:0000266"/>
    <property type="project" value="ComplexPortal"/>
</dbReference>
<dbReference type="GO" id="GO:0000578">
    <property type="term" value="P:embryonic axis specification"/>
    <property type="evidence" value="ECO:0000314"/>
    <property type="project" value="MGI"/>
</dbReference>
<dbReference type="GO" id="GO:0006611">
    <property type="term" value="P:protein export from nucleus"/>
    <property type="evidence" value="ECO:0000314"/>
    <property type="project" value="MGI"/>
</dbReference>
<dbReference type="GO" id="GO:0046825">
    <property type="term" value="P:regulation of protein export from nucleus"/>
    <property type="evidence" value="ECO:0000266"/>
    <property type="project" value="ComplexPortal"/>
</dbReference>
<dbReference type="InterPro" id="IPR008014">
    <property type="entry name" value="GSK3-bd"/>
</dbReference>
<dbReference type="PANTHER" id="PTHR35154">
    <property type="entry name" value="GBP PROTEIN"/>
    <property type="match status" value="1"/>
</dbReference>
<dbReference type="PANTHER" id="PTHR35154:SF1">
    <property type="entry name" value="PROTO-ONCOGENE FRAT1"/>
    <property type="match status" value="1"/>
</dbReference>
<dbReference type="Pfam" id="PF05350">
    <property type="entry name" value="GSK-3_bind"/>
    <property type="match status" value="1"/>
</dbReference>